<protein>
    <recommendedName>
        <fullName evidence="1">GTPase Obg</fullName>
        <ecNumber evidence="1">3.6.5.-</ecNumber>
    </recommendedName>
    <alternativeName>
        <fullName evidence="1">GTP-binding protein Obg</fullName>
    </alternativeName>
</protein>
<accession>Q8EWL0</accession>
<proteinExistence type="inferred from homology"/>
<sequence length="429" mass="48696">MLIDKCTLFLRAGNGGNGVISWRKEAHYPEGGPWGGDGGKGGDVYIIGDHNLNSLIDLRYKKKIEAEDGENGKTKLATGKNGNDIYIKVPVGTTITNSITNEVIVDILVTGQKYLICKGGMGGKGNAYFKSSKNRIPNLCENGELGETIEAQFELKYIADVGLLGLPNAGKSTLVNSLSNTNLKTANYMFTTLSPSLGVVNFEDEHLVFADIPGIIEDASNGSGLGLDFLKHIERCHFLIHLISVANIDTENPFKDYLTIVEELKKYNKEILKRKIFIVLNKIDENDSKDNINLFLKEFKKISNKKVYQISGFFKENTNELLKDIFKDYKKHKEQWERELEEKINSYSLVKVEKEQEDIVTYEKDENRIWVVSSKRIAYWFNRIPFNTDENVTRFMQKIKMDEIEQTLKDKGAKIGDSFRIQDVMFEIN</sequence>
<name>OBG_MALP2</name>
<feature type="chain" id="PRO_0000386075" description="GTPase Obg">
    <location>
        <begin position="1"/>
        <end position="429"/>
    </location>
</feature>
<feature type="domain" description="Obg" evidence="3">
    <location>
        <begin position="1"/>
        <end position="158"/>
    </location>
</feature>
<feature type="domain" description="OBG-type G" evidence="1">
    <location>
        <begin position="159"/>
        <end position="330"/>
    </location>
</feature>
<feature type="domain" description="OCT" evidence="2">
    <location>
        <begin position="351"/>
        <end position="429"/>
    </location>
</feature>
<feature type="binding site" evidence="1">
    <location>
        <begin position="165"/>
        <end position="172"/>
    </location>
    <ligand>
        <name>GTP</name>
        <dbReference type="ChEBI" id="CHEBI:37565"/>
    </ligand>
</feature>
<feature type="binding site" evidence="1">
    <location>
        <position position="172"/>
    </location>
    <ligand>
        <name>Mg(2+)</name>
        <dbReference type="ChEBI" id="CHEBI:18420"/>
    </ligand>
</feature>
<feature type="binding site" evidence="1">
    <location>
        <begin position="190"/>
        <end position="194"/>
    </location>
    <ligand>
        <name>GTP</name>
        <dbReference type="ChEBI" id="CHEBI:37565"/>
    </ligand>
</feature>
<feature type="binding site" evidence="1">
    <location>
        <position position="192"/>
    </location>
    <ligand>
        <name>Mg(2+)</name>
        <dbReference type="ChEBI" id="CHEBI:18420"/>
    </ligand>
</feature>
<feature type="binding site" evidence="1">
    <location>
        <begin position="211"/>
        <end position="214"/>
    </location>
    <ligand>
        <name>GTP</name>
        <dbReference type="ChEBI" id="CHEBI:37565"/>
    </ligand>
</feature>
<feature type="binding site" evidence="1">
    <location>
        <begin position="281"/>
        <end position="284"/>
    </location>
    <ligand>
        <name>GTP</name>
        <dbReference type="ChEBI" id="CHEBI:37565"/>
    </ligand>
</feature>
<feature type="binding site" evidence="1">
    <location>
        <begin position="311"/>
        <end position="313"/>
    </location>
    <ligand>
        <name>GTP</name>
        <dbReference type="ChEBI" id="CHEBI:37565"/>
    </ligand>
</feature>
<comment type="function">
    <text evidence="1">An essential GTPase which binds GTP, GDP and possibly (p)ppGpp with moderate affinity, with high nucleotide exchange rates and a fairly low GTP hydrolysis rate. Plays a role in control of the cell cycle, stress response, ribosome biogenesis and in those bacteria that undergo differentiation, in morphogenesis control.</text>
</comment>
<comment type="cofactor">
    <cofactor evidence="1">
        <name>Mg(2+)</name>
        <dbReference type="ChEBI" id="CHEBI:18420"/>
    </cofactor>
</comment>
<comment type="subunit">
    <text evidence="1">Monomer.</text>
</comment>
<comment type="subcellular location">
    <subcellularLocation>
        <location evidence="1">Cytoplasm</location>
    </subcellularLocation>
</comment>
<comment type="similarity">
    <text evidence="1">Belongs to the TRAFAC class OBG-HflX-like GTPase superfamily. OBG GTPase family.</text>
</comment>
<reference key="1">
    <citation type="journal article" date="2002" name="Nucleic Acids Res.">
        <title>The complete genomic sequence of Mycoplasma penetrans, an intracellular bacterial pathogen in humans.</title>
        <authorList>
            <person name="Sasaki Y."/>
            <person name="Ishikawa J."/>
            <person name="Yamashita A."/>
            <person name="Oshima K."/>
            <person name="Kenri T."/>
            <person name="Furuya K."/>
            <person name="Yoshino C."/>
            <person name="Horino A."/>
            <person name="Shiba T."/>
            <person name="Sasaki T."/>
            <person name="Hattori M."/>
        </authorList>
    </citation>
    <scope>NUCLEOTIDE SEQUENCE [LARGE SCALE GENOMIC DNA]</scope>
    <source>
        <strain>HF-2</strain>
    </source>
</reference>
<organism>
    <name type="scientific">Malacoplasma penetrans (strain HF-2)</name>
    <name type="common">Mycoplasma penetrans</name>
    <dbReference type="NCBI Taxonomy" id="272633"/>
    <lineage>
        <taxon>Bacteria</taxon>
        <taxon>Bacillati</taxon>
        <taxon>Mycoplasmatota</taxon>
        <taxon>Mycoplasmoidales</taxon>
        <taxon>Mycoplasmoidaceae</taxon>
        <taxon>Malacoplasma</taxon>
    </lineage>
</organism>
<evidence type="ECO:0000255" key="1">
    <source>
        <dbReference type="HAMAP-Rule" id="MF_01454"/>
    </source>
</evidence>
<evidence type="ECO:0000255" key="2">
    <source>
        <dbReference type="PROSITE-ProRule" id="PRU01229"/>
    </source>
</evidence>
<evidence type="ECO:0000255" key="3">
    <source>
        <dbReference type="PROSITE-ProRule" id="PRU01231"/>
    </source>
</evidence>
<dbReference type="EC" id="3.6.5.-" evidence="1"/>
<dbReference type="EMBL" id="BA000026">
    <property type="protein sequence ID" value="BAC43984.1"/>
    <property type="molecule type" value="Genomic_DNA"/>
</dbReference>
<dbReference type="RefSeq" id="WP_011077020.1">
    <property type="nucleotide sequence ID" value="NC_004432.1"/>
</dbReference>
<dbReference type="SMR" id="Q8EWL0"/>
<dbReference type="FunCoup" id="Q8EWL0">
    <property type="interactions" value="223"/>
</dbReference>
<dbReference type="STRING" id="272633.gene:10731292"/>
<dbReference type="KEGG" id="mpe:MYPE1930"/>
<dbReference type="eggNOG" id="COG0536">
    <property type="taxonomic scope" value="Bacteria"/>
</dbReference>
<dbReference type="HOGENOM" id="CLU_011747_2_1_14"/>
<dbReference type="InParanoid" id="Q8EWL0"/>
<dbReference type="Proteomes" id="UP000002522">
    <property type="component" value="Chromosome"/>
</dbReference>
<dbReference type="GO" id="GO:0005737">
    <property type="term" value="C:cytoplasm"/>
    <property type="evidence" value="ECO:0007669"/>
    <property type="project" value="UniProtKB-SubCell"/>
</dbReference>
<dbReference type="GO" id="GO:0005525">
    <property type="term" value="F:GTP binding"/>
    <property type="evidence" value="ECO:0007669"/>
    <property type="project" value="UniProtKB-UniRule"/>
</dbReference>
<dbReference type="GO" id="GO:0003924">
    <property type="term" value="F:GTPase activity"/>
    <property type="evidence" value="ECO:0007669"/>
    <property type="project" value="UniProtKB-UniRule"/>
</dbReference>
<dbReference type="GO" id="GO:0000287">
    <property type="term" value="F:magnesium ion binding"/>
    <property type="evidence" value="ECO:0007669"/>
    <property type="project" value="InterPro"/>
</dbReference>
<dbReference type="GO" id="GO:0042254">
    <property type="term" value="P:ribosome biogenesis"/>
    <property type="evidence" value="ECO:0007669"/>
    <property type="project" value="UniProtKB-UniRule"/>
</dbReference>
<dbReference type="CDD" id="cd01898">
    <property type="entry name" value="Obg"/>
    <property type="match status" value="1"/>
</dbReference>
<dbReference type="FunFam" id="2.70.210.12:FF:000001">
    <property type="entry name" value="GTPase Obg"/>
    <property type="match status" value="1"/>
</dbReference>
<dbReference type="Gene3D" id="3.30.300.350">
    <property type="entry name" value="GTP-binding protein OBG, C-terminal domain"/>
    <property type="match status" value="1"/>
</dbReference>
<dbReference type="Gene3D" id="2.70.210.12">
    <property type="entry name" value="GTP1/OBG domain"/>
    <property type="match status" value="1"/>
</dbReference>
<dbReference type="Gene3D" id="3.40.50.300">
    <property type="entry name" value="P-loop containing nucleotide triphosphate hydrolases"/>
    <property type="match status" value="1"/>
</dbReference>
<dbReference type="HAMAP" id="MF_01454">
    <property type="entry name" value="GTPase_Obg"/>
    <property type="match status" value="1"/>
</dbReference>
<dbReference type="InterPro" id="IPR031167">
    <property type="entry name" value="G_OBG"/>
</dbReference>
<dbReference type="InterPro" id="IPR006073">
    <property type="entry name" value="GTP-bd"/>
</dbReference>
<dbReference type="InterPro" id="IPR014100">
    <property type="entry name" value="GTP-bd_Obg/CgtA"/>
</dbReference>
<dbReference type="InterPro" id="IPR036346">
    <property type="entry name" value="GTP-bd_prot_GTP1/OBG_C_sf"/>
</dbReference>
<dbReference type="InterPro" id="IPR006169">
    <property type="entry name" value="GTP1_OBG_dom"/>
</dbReference>
<dbReference type="InterPro" id="IPR036726">
    <property type="entry name" value="GTP1_OBG_dom_sf"/>
</dbReference>
<dbReference type="InterPro" id="IPR045086">
    <property type="entry name" value="OBG_GTPase"/>
</dbReference>
<dbReference type="InterPro" id="IPR015349">
    <property type="entry name" value="OCT_dom"/>
</dbReference>
<dbReference type="InterPro" id="IPR027417">
    <property type="entry name" value="P-loop_NTPase"/>
</dbReference>
<dbReference type="InterPro" id="IPR005225">
    <property type="entry name" value="Small_GTP-bd"/>
</dbReference>
<dbReference type="NCBIfam" id="TIGR02729">
    <property type="entry name" value="Obg_CgtA"/>
    <property type="match status" value="1"/>
</dbReference>
<dbReference type="NCBIfam" id="TIGR03595">
    <property type="entry name" value="Obg_CgtA_exten"/>
    <property type="match status" value="1"/>
</dbReference>
<dbReference type="NCBIfam" id="NF008955">
    <property type="entry name" value="PRK12297.1"/>
    <property type="match status" value="1"/>
</dbReference>
<dbReference type="NCBIfam" id="NF008956">
    <property type="entry name" value="PRK12299.1"/>
    <property type="match status" value="1"/>
</dbReference>
<dbReference type="NCBIfam" id="TIGR00231">
    <property type="entry name" value="small_GTP"/>
    <property type="match status" value="1"/>
</dbReference>
<dbReference type="PANTHER" id="PTHR11702">
    <property type="entry name" value="DEVELOPMENTALLY REGULATED GTP-BINDING PROTEIN-RELATED"/>
    <property type="match status" value="1"/>
</dbReference>
<dbReference type="PANTHER" id="PTHR11702:SF31">
    <property type="entry name" value="MITOCHONDRIAL RIBOSOME-ASSOCIATED GTPASE 2"/>
    <property type="match status" value="1"/>
</dbReference>
<dbReference type="Pfam" id="PF09269">
    <property type="entry name" value="DUF1967"/>
    <property type="match status" value="1"/>
</dbReference>
<dbReference type="Pfam" id="PF01018">
    <property type="entry name" value="GTP1_OBG"/>
    <property type="match status" value="1"/>
</dbReference>
<dbReference type="Pfam" id="PF01926">
    <property type="entry name" value="MMR_HSR1"/>
    <property type="match status" value="1"/>
</dbReference>
<dbReference type="PIRSF" id="PIRSF002401">
    <property type="entry name" value="GTP_bd_Obg/CgtA"/>
    <property type="match status" value="1"/>
</dbReference>
<dbReference type="PRINTS" id="PR00326">
    <property type="entry name" value="GTP1OBG"/>
</dbReference>
<dbReference type="SUPFAM" id="SSF102741">
    <property type="entry name" value="Obg GTP-binding protein C-terminal domain"/>
    <property type="match status" value="1"/>
</dbReference>
<dbReference type="SUPFAM" id="SSF82051">
    <property type="entry name" value="Obg GTP-binding protein N-terminal domain"/>
    <property type="match status" value="1"/>
</dbReference>
<dbReference type="SUPFAM" id="SSF52540">
    <property type="entry name" value="P-loop containing nucleoside triphosphate hydrolases"/>
    <property type="match status" value="1"/>
</dbReference>
<dbReference type="PROSITE" id="PS51710">
    <property type="entry name" value="G_OBG"/>
    <property type="match status" value="1"/>
</dbReference>
<dbReference type="PROSITE" id="PS51883">
    <property type="entry name" value="OBG"/>
    <property type="match status" value="1"/>
</dbReference>
<dbReference type="PROSITE" id="PS51881">
    <property type="entry name" value="OCT"/>
    <property type="match status" value="1"/>
</dbReference>
<gene>
    <name evidence="1" type="primary">obg</name>
    <name type="ordered locus">MYPE1930</name>
</gene>
<keyword id="KW-0963">Cytoplasm</keyword>
<keyword id="KW-0342">GTP-binding</keyword>
<keyword id="KW-0378">Hydrolase</keyword>
<keyword id="KW-0460">Magnesium</keyword>
<keyword id="KW-0479">Metal-binding</keyword>
<keyword id="KW-0547">Nucleotide-binding</keyword>
<keyword id="KW-1185">Reference proteome</keyword>